<feature type="transit peptide" description="Chloroplast" evidence="3">
    <location>
        <begin position="1"/>
        <end position="64"/>
    </location>
</feature>
<feature type="chain" id="PRO_0000412189" description="Heme oxygenase 1, chloroplastic">
    <location>
        <begin position="65"/>
        <end position="289"/>
    </location>
</feature>
<feature type="binding site" description="axial binding residue" evidence="1">
    <location>
        <position position="96"/>
    </location>
    <ligand>
        <name>heme b</name>
        <dbReference type="ChEBI" id="CHEBI:60344"/>
    </ligand>
    <ligandPart>
        <name>Fe</name>
        <dbReference type="ChEBI" id="CHEBI:18248"/>
    </ligandPart>
</feature>
<sequence>MAPAAASLTAPNALAATSLPFLHGRKSGGGGVSVHAGAPSPSRAVAVVARRLWGSASSSRRMVVAAATAAEMAPAASGEEGKPFVEEMRAVAMRLHTKDQAKEGEKEPQAPPVARWEPSVDGYLRFLVDSKLVFETLETIVDRAAVPWYAEFRNTGLERSEQLKKDLEWFKEQGHTIPEPSAPGTTYASYLEELAEKDSQAFICHFYNVYFAHTAGGRMIGKKVSENILNKKELEFYKWEGNLSQLLQNVRNKLNEVASSWTREEKDHCLDETEKSFSYSGDLLRHIFT</sequence>
<organism>
    <name type="scientific">Oryza sativa subsp. japonica</name>
    <name type="common">Rice</name>
    <dbReference type="NCBI Taxonomy" id="39947"/>
    <lineage>
        <taxon>Eukaryota</taxon>
        <taxon>Viridiplantae</taxon>
        <taxon>Streptophyta</taxon>
        <taxon>Embryophyta</taxon>
        <taxon>Tracheophyta</taxon>
        <taxon>Spermatophyta</taxon>
        <taxon>Magnoliopsida</taxon>
        <taxon>Liliopsida</taxon>
        <taxon>Poales</taxon>
        <taxon>Poaceae</taxon>
        <taxon>BOP clade</taxon>
        <taxon>Oryzoideae</taxon>
        <taxon>Oryzeae</taxon>
        <taxon>Oryzinae</taxon>
        <taxon>Oryza</taxon>
        <taxon>Oryza sativa</taxon>
    </lineage>
</organism>
<comment type="function">
    <text evidence="4 5">Catalyzes the opening of the heme ring to form the open-chain tetrapyrrole biliverdin IX with the release of iron and carbon monoxide (CO). Is a key enzyme in the synthesis of the chromophore of the phytochrome family of plant photoreceptors. Essential for photoperiod response and repression of flowering through cytochromes that inhibit flowering by affecting both HD1 and EHD1 flowering pathways.</text>
</comment>
<comment type="catalytic activity">
    <reaction evidence="2">
        <text>heme b + 3 reduced [NADPH--hemoprotein reductase] + 3 O2 = biliverdin IXalpha + CO + Fe(2+) + 3 oxidized [NADPH--hemoprotein reductase] + 3 H2O + H(+)</text>
        <dbReference type="Rhea" id="RHEA:21764"/>
        <dbReference type="Rhea" id="RHEA-COMP:11964"/>
        <dbReference type="Rhea" id="RHEA-COMP:11965"/>
        <dbReference type="ChEBI" id="CHEBI:15377"/>
        <dbReference type="ChEBI" id="CHEBI:15378"/>
        <dbReference type="ChEBI" id="CHEBI:15379"/>
        <dbReference type="ChEBI" id="CHEBI:17245"/>
        <dbReference type="ChEBI" id="CHEBI:29033"/>
        <dbReference type="ChEBI" id="CHEBI:57618"/>
        <dbReference type="ChEBI" id="CHEBI:57991"/>
        <dbReference type="ChEBI" id="CHEBI:58210"/>
        <dbReference type="ChEBI" id="CHEBI:60344"/>
        <dbReference type="EC" id="1.14.14.18"/>
    </reaction>
</comment>
<comment type="subcellular location">
    <subcellularLocation>
        <location>Plastid</location>
        <location>Chloroplast</location>
    </subcellularLocation>
</comment>
<comment type="disruption phenotype">
    <text evidence="4 5">Pale green and very early flowering phenotype and complete deficiency in photoperiodic response. Lack of photoreversible phytochromes and responses of coleoptile elongation by light pulses.</text>
</comment>
<comment type="similarity">
    <text evidence="6">Belongs to the heme oxygenase family.</text>
</comment>
<protein>
    <recommendedName>
        <fullName>Heme oxygenase 1, chloroplastic</fullName>
        <ecNumber evidence="2">1.14.14.18</ecNumber>
    </recommendedName>
    <alternativeName>
        <fullName>Protein PHOTOPERIODIC SENSITIVITY 5</fullName>
    </alternativeName>
</protein>
<dbReference type="EC" id="1.14.14.18" evidence="2"/>
<dbReference type="EMBL" id="EU781632">
    <property type="protein sequence ID" value="ACE98543.1"/>
    <property type="molecule type" value="mRNA"/>
</dbReference>
<dbReference type="EMBL" id="AP003615">
    <property type="protein sequence ID" value="BAD35463.1"/>
    <property type="molecule type" value="Genomic_DNA"/>
</dbReference>
<dbReference type="EMBL" id="AP008212">
    <property type="protein sequence ID" value="BAF19925.1"/>
    <property type="molecule type" value="Genomic_DNA"/>
</dbReference>
<dbReference type="EMBL" id="AP014962">
    <property type="protein sequence ID" value="BAS98507.1"/>
    <property type="molecule type" value="Genomic_DNA"/>
</dbReference>
<dbReference type="EMBL" id="CM000143">
    <property type="protein sequence ID" value="EEE65978.1"/>
    <property type="molecule type" value="Genomic_DNA"/>
</dbReference>
<dbReference type="EMBL" id="AK068856">
    <property type="protein sequence ID" value="BAG91127.1"/>
    <property type="molecule type" value="mRNA"/>
</dbReference>
<dbReference type="EMBL" id="AK104955">
    <property type="protein sequence ID" value="BAG97040.1"/>
    <property type="molecule type" value="mRNA"/>
</dbReference>
<dbReference type="RefSeq" id="XP_015643881.1">
    <property type="nucleotide sequence ID" value="XM_015788395.1"/>
</dbReference>
<dbReference type="SMR" id="Q69XJ4"/>
<dbReference type="FunCoup" id="Q69XJ4">
    <property type="interactions" value="386"/>
</dbReference>
<dbReference type="STRING" id="39947.Q69XJ4"/>
<dbReference type="PaxDb" id="39947-Q69XJ4"/>
<dbReference type="EnsemblPlants" id="Os06t0603000-01">
    <property type="protein sequence ID" value="Os06t0603000-01"/>
    <property type="gene ID" value="Os06g0603000"/>
</dbReference>
<dbReference type="Gramene" id="Os06t0603000-01">
    <property type="protein sequence ID" value="Os06t0603000-01"/>
    <property type="gene ID" value="Os06g0603000"/>
</dbReference>
<dbReference type="KEGG" id="dosa:Os06g0603000"/>
<dbReference type="eggNOG" id="KOG4480">
    <property type="taxonomic scope" value="Eukaryota"/>
</dbReference>
<dbReference type="HOGENOM" id="CLU_063325_1_0_1"/>
<dbReference type="InParanoid" id="Q69XJ4"/>
<dbReference type="OMA" id="PPEFICH"/>
<dbReference type="OrthoDB" id="652091at2759"/>
<dbReference type="Proteomes" id="UP000000763">
    <property type="component" value="Chromosome 6"/>
</dbReference>
<dbReference type="Proteomes" id="UP000007752">
    <property type="component" value="Chromosome 6"/>
</dbReference>
<dbReference type="Proteomes" id="UP000059680">
    <property type="component" value="Chromosome 6"/>
</dbReference>
<dbReference type="GO" id="GO:0009507">
    <property type="term" value="C:chloroplast"/>
    <property type="evidence" value="ECO:0007669"/>
    <property type="project" value="UniProtKB-SubCell"/>
</dbReference>
<dbReference type="GO" id="GO:0004392">
    <property type="term" value="F:heme oxygenase (decyclizing) activity"/>
    <property type="evidence" value="ECO:0000250"/>
    <property type="project" value="Gramene"/>
</dbReference>
<dbReference type="GO" id="GO:0046872">
    <property type="term" value="F:metal ion binding"/>
    <property type="evidence" value="ECO:0007669"/>
    <property type="project" value="UniProtKB-KW"/>
</dbReference>
<dbReference type="GO" id="GO:0006788">
    <property type="term" value="P:heme oxidation"/>
    <property type="evidence" value="ECO:0000250"/>
    <property type="project" value="Gramene"/>
</dbReference>
<dbReference type="GO" id="GO:0010229">
    <property type="term" value="P:inflorescence development"/>
    <property type="evidence" value="ECO:0000315"/>
    <property type="project" value="Gramene"/>
</dbReference>
<dbReference type="GO" id="GO:0009648">
    <property type="term" value="P:photoperiodism"/>
    <property type="evidence" value="ECO:0000315"/>
    <property type="project" value="Gramene"/>
</dbReference>
<dbReference type="GO" id="GO:0048573">
    <property type="term" value="P:photoperiodism, flowering"/>
    <property type="evidence" value="ECO:0000315"/>
    <property type="project" value="UniProtKB"/>
</dbReference>
<dbReference type="GO" id="GO:0015979">
    <property type="term" value="P:photosynthesis"/>
    <property type="evidence" value="ECO:0007669"/>
    <property type="project" value="UniProtKB-KW"/>
</dbReference>
<dbReference type="CDD" id="cd19165">
    <property type="entry name" value="HemeO"/>
    <property type="match status" value="1"/>
</dbReference>
<dbReference type="FunFam" id="1.20.910.10:FF:000005">
    <property type="entry name" value="Heme oxygenase 1"/>
    <property type="match status" value="1"/>
</dbReference>
<dbReference type="Gene3D" id="1.20.910.10">
    <property type="entry name" value="Heme oxygenase-like"/>
    <property type="match status" value="1"/>
</dbReference>
<dbReference type="InterPro" id="IPR002051">
    <property type="entry name" value="Haem_Oase"/>
</dbReference>
<dbReference type="InterPro" id="IPR016053">
    <property type="entry name" value="Haem_Oase-like"/>
</dbReference>
<dbReference type="InterPro" id="IPR016084">
    <property type="entry name" value="Haem_Oase-like_multi-hlx"/>
</dbReference>
<dbReference type="InterPro" id="IPR016951">
    <property type="entry name" value="Haem_Oase_decyc_pln"/>
</dbReference>
<dbReference type="PANTHER" id="PTHR35703">
    <property type="entry name" value="HEME OXYGENASE 1, CHLOROPLASTIC-RELATED"/>
    <property type="match status" value="1"/>
</dbReference>
<dbReference type="PANTHER" id="PTHR35703:SF2">
    <property type="entry name" value="HEME OXYGENASE 1, CHLOROPLASTIC-RELATED"/>
    <property type="match status" value="1"/>
</dbReference>
<dbReference type="Pfam" id="PF01126">
    <property type="entry name" value="Heme_oxygenase"/>
    <property type="match status" value="1"/>
</dbReference>
<dbReference type="PIRSF" id="PIRSF030219">
    <property type="entry name" value="Heme_Oase_decyc_pln"/>
    <property type="match status" value="1"/>
</dbReference>
<dbReference type="SUPFAM" id="SSF48613">
    <property type="entry name" value="Heme oxygenase-like"/>
    <property type="match status" value="1"/>
</dbReference>
<reference key="1">
    <citation type="submission" date="2008-06" db="EMBL/GenBank/DDBJ databases">
        <title>Cloning and characterization of heme oxygenase-1 from Oryza sativa.</title>
        <authorList>
            <person name="Xu S."/>
            <person name="Wu T.T."/>
            <person name="Lu H."/>
            <person name="Ling T.F."/>
            <person name="Xuan W."/>
            <person name="Sun Y.G."/>
            <person name="Cao Z."/>
            <person name="Shen W.B."/>
        </authorList>
    </citation>
    <scope>NUCLEOTIDE SEQUENCE [MRNA]</scope>
</reference>
<reference key="2">
    <citation type="journal article" date="2005" name="Nature">
        <title>The map-based sequence of the rice genome.</title>
        <authorList>
            <consortium name="International rice genome sequencing project (IRGSP)"/>
        </authorList>
    </citation>
    <scope>NUCLEOTIDE SEQUENCE [LARGE SCALE GENOMIC DNA]</scope>
    <source>
        <strain>cv. Nipponbare</strain>
    </source>
</reference>
<reference key="3">
    <citation type="journal article" date="2008" name="Nucleic Acids Res.">
        <title>The rice annotation project database (RAP-DB): 2008 update.</title>
        <authorList>
            <consortium name="The rice annotation project (RAP)"/>
        </authorList>
    </citation>
    <scope>GENOME REANNOTATION</scope>
    <source>
        <strain>cv. Nipponbare</strain>
    </source>
</reference>
<reference key="4">
    <citation type="journal article" date="2013" name="Rice">
        <title>Improvement of the Oryza sativa Nipponbare reference genome using next generation sequence and optical map data.</title>
        <authorList>
            <person name="Kawahara Y."/>
            <person name="de la Bastide M."/>
            <person name="Hamilton J.P."/>
            <person name="Kanamori H."/>
            <person name="McCombie W.R."/>
            <person name="Ouyang S."/>
            <person name="Schwartz D.C."/>
            <person name="Tanaka T."/>
            <person name="Wu J."/>
            <person name="Zhou S."/>
            <person name="Childs K.L."/>
            <person name="Davidson R.M."/>
            <person name="Lin H."/>
            <person name="Quesada-Ocampo L."/>
            <person name="Vaillancourt B."/>
            <person name="Sakai H."/>
            <person name="Lee S.S."/>
            <person name="Kim J."/>
            <person name="Numa H."/>
            <person name="Itoh T."/>
            <person name="Buell C.R."/>
            <person name="Matsumoto T."/>
        </authorList>
    </citation>
    <scope>GENOME REANNOTATION</scope>
    <source>
        <strain>cv. Nipponbare</strain>
    </source>
</reference>
<reference key="5">
    <citation type="journal article" date="2005" name="PLoS Biol.">
        <title>The genomes of Oryza sativa: a history of duplications.</title>
        <authorList>
            <person name="Yu J."/>
            <person name="Wang J."/>
            <person name="Lin W."/>
            <person name="Li S."/>
            <person name="Li H."/>
            <person name="Zhou J."/>
            <person name="Ni P."/>
            <person name="Dong W."/>
            <person name="Hu S."/>
            <person name="Zeng C."/>
            <person name="Zhang J."/>
            <person name="Zhang Y."/>
            <person name="Li R."/>
            <person name="Xu Z."/>
            <person name="Li S."/>
            <person name="Li X."/>
            <person name="Zheng H."/>
            <person name="Cong L."/>
            <person name="Lin L."/>
            <person name="Yin J."/>
            <person name="Geng J."/>
            <person name="Li G."/>
            <person name="Shi J."/>
            <person name="Liu J."/>
            <person name="Lv H."/>
            <person name="Li J."/>
            <person name="Wang J."/>
            <person name="Deng Y."/>
            <person name="Ran L."/>
            <person name="Shi X."/>
            <person name="Wang X."/>
            <person name="Wu Q."/>
            <person name="Li C."/>
            <person name="Ren X."/>
            <person name="Wang J."/>
            <person name="Wang X."/>
            <person name="Li D."/>
            <person name="Liu D."/>
            <person name="Zhang X."/>
            <person name="Ji Z."/>
            <person name="Zhao W."/>
            <person name="Sun Y."/>
            <person name="Zhang Z."/>
            <person name="Bao J."/>
            <person name="Han Y."/>
            <person name="Dong L."/>
            <person name="Ji J."/>
            <person name="Chen P."/>
            <person name="Wu S."/>
            <person name="Liu J."/>
            <person name="Xiao Y."/>
            <person name="Bu D."/>
            <person name="Tan J."/>
            <person name="Yang L."/>
            <person name="Ye C."/>
            <person name="Zhang J."/>
            <person name="Xu J."/>
            <person name="Zhou Y."/>
            <person name="Yu Y."/>
            <person name="Zhang B."/>
            <person name="Zhuang S."/>
            <person name="Wei H."/>
            <person name="Liu B."/>
            <person name="Lei M."/>
            <person name="Yu H."/>
            <person name="Li Y."/>
            <person name="Xu H."/>
            <person name="Wei S."/>
            <person name="He X."/>
            <person name="Fang L."/>
            <person name="Zhang Z."/>
            <person name="Zhang Y."/>
            <person name="Huang X."/>
            <person name="Su Z."/>
            <person name="Tong W."/>
            <person name="Li J."/>
            <person name="Tong Z."/>
            <person name="Li S."/>
            <person name="Ye J."/>
            <person name="Wang L."/>
            <person name="Fang L."/>
            <person name="Lei T."/>
            <person name="Chen C.-S."/>
            <person name="Chen H.-C."/>
            <person name="Xu Z."/>
            <person name="Li H."/>
            <person name="Huang H."/>
            <person name="Zhang F."/>
            <person name="Xu H."/>
            <person name="Li N."/>
            <person name="Zhao C."/>
            <person name="Li S."/>
            <person name="Dong L."/>
            <person name="Huang Y."/>
            <person name="Li L."/>
            <person name="Xi Y."/>
            <person name="Qi Q."/>
            <person name="Li W."/>
            <person name="Zhang B."/>
            <person name="Hu W."/>
            <person name="Zhang Y."/>
            <person name="Tian X."/>
            <person name="Jiao Y."/>
            <person name="Liang X."/>
            <person name="Jin J."/>
            <person name="Gao L."/>
            <person name="Zheng W."/>
            <person name="Hao B."/>
            <person name="Liu S.-M."/>
            <person name="Wang W."/>
            <person name="Yuan L."/>
            <person name="Cao M."/>
            <person name="McDermott J."/>
            <person name="Samudrala R."/>
            <person name="Wang J."/>
            <person name="Wong G.K.-S."/>
            <person name="Yang H."/>
        </authorList>
    </citation>
    <scope>NUCLEOTIDE SEQUENCE [LARGE SCALE GENOMIC DNA]</scope>
    <source>
        <strain>cv. Nipponbare</strain>
    </source>
</reference>
<reference key="6">
    <citation type="journal article" date="2003" name="Science">
        <title>Collection, mapping, and annotation of over 28,000 cDNA clones from japonica rice.</title>
        <authorList>
            <consortium name="The rice full-length cDNA consortium"/>
        </authorList>
    </citation>
    <scope>NUCLEOTIDE SEQUENCE [LARGE SCALE MRNA]</scope>
    <source>
        <strain>cv. Nipponbare</strain>
    </source>
</reference>
<reference key="7">
    <citation type="journal article" date="2000" name="Plant J.">
        <title>Phytochromes confer the photoperiodic control of flowering in rice (a short-day plant).</title>
        <authorList>
            <person name="Izawa T."/>
            <person name="Oikawa T."/>
            <person name="Tokutomi S."/>
            <person name="Okuno K."/>
            <person name="Shimamoto K."/>
        </authorList>
    </citation>
    <scope>FUNCTION</scope>
    <scope>DISRUPTION PHENOTYPE</scope>
</reference>
<reference key="8">
    <citation type="journal article" date="2009" name="Plant Physiol.">
        <title>Analysis of PHOTOPERIOD SENSITIVITY5 sheds light on the role of phytochromes in photoperiodic flowering in rice.</title>
        <authorList>
            <person name="Andres F."/>
            <person name="Galbraith D.W."/>
            <person name="Talon M."/>
            <person name="Domingo C."/>
        </authorList>
    </citation>
    <scope>FUNCTION</scope>
    <scope>DISRUPTION PHENOTYPE</scope>
</reference>
<gene>
    <name type="primary">HO1</name>
    <name type="synonym">HY1</name>
    <name type="synonym">SE5</name>
    <name type="ordered locus">Os06g0603000</name>
    <name type="ordered locus">LOC_Os06g40080</name>
    <name type="ORF">OsJ_21897</name>
    <name type="ORF">P0486H12.31</name>
</gene>
<keyword id="KW-0150">Chloroplast</keyword>
<keyword id="KW-0349">Heme</keyword>
<keyword id="KW-0408">Iron</keyword>
<keyword id="KW-0479">Metal-binding</keyword>
<keyword id="KW-0560">Oxidoreductase</keyword>
<keyword id="KW-0602">Photosynthesis</keyword>
<keyword id="KW-0934">Plastid</keyword>
<keyword id="KW-1185">Reference proteome</keyword>
<keyword id="KW-0809">Transit peptide</keyword>
<accession>Q69XJ4</accession>
<accession>A0A0P0WYR3</accession>
<proteinExistence type="evidence at transcript level"/>
<evidence type="ECO:0000250" key="1"/>
<evidence type="ECO:0000250" key="2">
    <source>
        <dbReference type="UniProtKB" id="O48782"/>
    </source>
</evidence>
<evidence type="ECO:0000255" key="3"/>
<evidence type="ECO:0000269" key="4">
    <source>
    </source>
</evidence>
<evidence type="ECO:0000269" key="5">
    <source>
    </source>
</evidence>
<evidence type="ECO:0000305" key="6"/>
<name>HMOX1_ORYSJ</name>